<organism>
    <name type="scientific">Francisella tularensis subsp. mediasiatica (strain FSC147)</name>
    <dbReference type="NCBI Taxonomy" id="441952"/>
    <lineage>
        <taxon>Bacteria</taxon>
        <taxon>Pseudomonadati</taxon>
        <taxon>Pseudomonadota</taxon>
        <taxon>Gammaproteobacteria</taxon>
        <taxon>Thiotrichales</taxon>
        <taxon>Francisellaceae</taxon>
        <taxon>Francisella</taxon>
    </lineage>
</organism>
<reference key="1">
    <citation type="journal article" date="2009" name="PLoS Pathog.">
        <title>Molecular evolutionary consequences of niche restriction in Francisella tularensis, a facultative intracellular pathogen.</title>
        <authorList>
            <person name="Larsson P."/>
            <person name="Elfsmark D."/>
            <person name="Svensson K."/>
            <person name="Wikstroem P."/>
            <person name="Forsman M."/>
            <person name="Brettin T."/>
            <person name="Keim P."/>
            <person name="Johansson A."/>
        </authorList>
    </citation>
    <scope>NUCLEOTIDE SEQUENCE [LARGE SCALE GENOMIC DNA]</scope>
    <source>
        <strain>FSC147</strain>
    </source>
</reference>
<protein>
    <recommendedName>
        <fullName evidence="1">Large ribosomal subunit protein bL21</fullName>
    </recommendedName>
    <alternativeName>
        <fullName evidence="2">50S ribosomal protein L21</fullName>
    </alternativeName>
</protein>
<dbReference type="EMBL" id="CP000915">
    <property type="protein sequence ID" value="ACD31162.1"/>
    <property type="molecule type" value="Genomic_DNA"/>
</dbReference>
<dbReference type="SMR" id="B2SDE8"/>
<dbReference type="KEGG" id="ftm:FTM_1316"/>
<dbReference type="HOGENOM" id="CLU_061463_3_2_6"/>
<dbReference type="GO" id="GO:0005737">
    <property type="term" value="C:cytoplasm"/>
    <property type="evidence" value="ECO:0007669"/>
    <property type="project" value="UniProtKB-ARBA"/>
</dbReference>
<dbReference type="GO" id="GO:1990904">
    <property type="term" value="C:ribonucleoprotein complex"/>
    <property type="evidence" value="ECO:0007669"/>
    <property type="project" value="UniProtKB-KW"/>
</dbReference>
<dbReference type="GO" id="GO:0005840">
    <property type="term" value="C:ribosome"/>
    <property type="evidence" value="ECO:0007669"/>
    <property type="project" value="UniProtKB-KW"/>
</dbReference>
<dbReference type="GO" id="GO:0019843">
    <property type="term" value="F:rRNA binding"/>
    <property type="evidence" value="ECO:0007669"/>
    <property type="project" value="UniProtKB-UniRule"/>
</dbReference>
<dbReference type="GO" id="GO:0003735">
    <property type="term" value="F:structural constituent of ribosome"/>
    <property type="evidence" value="ECO:0007669"/>
    <property type="project" value="InterPro"/>
</dbReference>
<dbReference type="GO" id="GO:0006412">
    <property type="term" value="P:translation"/>
    <property type="evidence" value="ECO:0007669"/>
    <property type="project" value="UniProtKB-UniRule"/>
</dbReference>
<dbReference type="HAMAP" id="MF_01363">
    <property type="entry name" value="Ribosomal_bL21"/>
    <property type="match status" value="1"/>
</dbReference>
<dbReference type="InterPro" id="IPR028909">
    <property type="entry name" value="bL21-like"/>
</dbReference>
<dbReference type="InterPro" id="IPR036164">
    <property type="entry name" value="bL21-like_sf"/>
</dbReference>
<dbReference type="InterPro" id="IPR001787">
    <property type="entry name" value="Ribosomal_bL21"/>
</dbReference>
<dbReference type="InterPro" id="IPR018258">
    <property type="entry name" value="Ribosomal_bL21_CS"/>
</dbReference>
<dbReference type="NCBIfam" id="TIGR00061">
    <property type="entry name" value="L21"/>
    <property type="match status" value="1"/>
</dbReference>
<dbReference type="PANTHER" id="PTHR21349">
    <property type="entry name" value="50S RIBOSOMAL PROTEIN L21"/>
    <property type="match status" value="1"/>
</dbReference>
<dbReference type="PANTHER" id="PTHR21349:SF0">
    <property type="entry name" value="LARGE RIBOSOMAL SUBUNIT PROTEIN BL21M"/>
    <property type="match status" value="1"/>
</dbReference>
<dbReference type="Pfam" id="PF00829">
    <property type="entry name" value="Ribosomal_L21p"/>
    <property type="match status" value="1"/>
</dbReference>
<dbReference type="SUPFAM" id="SSF141091">
    <property type="entry name" value="L21p-like"/>
    <property type="match status" value="1"/>
</dbReference>
<dbReference type="PROSITE" id="PS01169">
    <property type="entry name" value="RIBOSOMAL_L21"/>
    <property type="match status" value="1"/>
</dbReference>
<sequence>MYAIIKNGGKQYKVKEGEVVKLEKFDLGIGEKVEFDTVLMGQTAAGEVKIGAPTVAGAKVVGEVVEQGRHKKVKIMKFRRRKHSMKQQGHRQYFTAVKVSSISL</sequence>
<keyword id="KW-0687">Ribonucleoprotein</keyword>
<keyword id="KW-0689">Ribosomal protein</keyword>
<keyword id="KW-0694">RNA-binding</keyword>
<keyword id="KW-0699">rRNA-binding</keyword>
<proteinExistence type="inferred from homology"/>
<accession>B2SDE8</accession>
<feature type="chain" id="PRO_1000143802" description="Large ribosomal subunit protein bL21">
    <location>
        <begin position="1"/>
        <end position="104"/>
    </location>
</feature>
<gene>
    <name evidence="1" type="primary">rplU</name>
    <name type="ordered locus">FTM_1316</name>
</gene>
<comment type="function">
    <text evidence="1">This protein binds to 23S rRNA in the presence of protein L20.</text>
</comment>
<comment type="subunit">
    <text evidence="1">Part of the 50S ribosomal subunit. Contacts protein L20.</text>
</comment>
<comment type="similarity">
    <text evidence="1">Belongs to the bacterial ribosomal protein bL21 family.</text>
</comment>
<name>RL21_FRATM</name>
<evidence type="ECO:0000255" key="1">
    <source>
        <dbReference type="HAMAP-Rule" id="MF_01363"/>
    </source>
</evidence>
<evidence type="ECO:0000305" key="2"/>